<protein>
    <recommendedName>
        <fullName>Fructose-bisphosphate aldolase</fullName>
        <shortName>FBP aldolase</shortName>
        <shortName>FBPA</shortName>
        <ecNumber>4.1.2.13</ecNumber>
    </recommendedName>
    <alternativeName>
        <fullName>Fructose-1,6-bisphosphate aldolase</fullName>
    </alternativeName>
</protein>
<evidence type="ECO:0000250" key="1"/>
<evidence type="ECO:0000305" key="2"/>
<keyword id="KW-0324">Glycolysis</keyword>
<keyword id="KW-0456">Lyase</keyword>
<keyword id="KW-0479">Metal-binding</keyword>
<keyword id="KW-1185">Reference proteome</keyword>
<keyword id="KW-0862">Zinc</keyword>
<name>ALF_STRCO</name>
<dbReference type="EC" id="4.1.2.13"/>
<dbReference type="EMBL" id="AL939117">
    <property type="protein sequence ID" value="CAB42036.1"/>
    <property type="molecule type" value="Genomic_DNA"/>
</dbReference>
<dbReference type="PIR" id="T36539">
    <property type="entry name" value="T36539"/>
</dbReference>
<dbReference type="RefSeq" id="NP_627843.1">
    <property type="nucleotide sequence ID" value="NC_003888.3"/>
</dbReference>
<dbReference type="SMR" id="Q9X8R6"/>
<dbReference type="FunCoup" id="Q9X8R6">
    <property type="interactions" value="258"/>
</dbReference>
<dbReference type="STRING" id="100226.gene:17761272"/>
<dbReference type="PaxDb" id="100226-SCO3649"/>
<dbReference type="KEGG" id="sco:SCO3649"/>
<dbReference type="PATRIC" id="fig|100226.15.peg.3709"/>
<dbReference type="eggNOG" id="COG0191">
    <property type="taxonomic scope" value="Bacteria"/>
</dbReference>
<dbReference type="HOGENOM" id="CLU_036923_1_0_11"/>
<dbReference type="InParanoid" id="Q9X8R6"/>
<dbReference type="OrthoDB" id="9803995at2"/>
<dbReference type="PhylomeDB" id="Q9X8R6"/>
<dbReference type="UniPathway" id="UPA00109">
    <property type="reaction ID" value="UER00183"/>
</dbReference>
<dbReference type="Proteomes" id="UP000001973">
    <property type="component" value="Chromosome"/>
</dbReference>
<dbReference type="GO" id="GO:0005829">
    <property type="term" value="C:cytosol"/>
    <property type="evidence" value="ECO:0000318"/>
    <property type="project" value="GO_Central"/>
</dbReference>
<dbReference type="GO" id="GO:0004332">
    <property type="term" value="F:fructose-bisphosphate aldolase activity"/>
    <property type="evidence" value="ECO:0000318"/>
    <property type="project" value="GO_Central"/>
</dbReference>
<dbReference type="GO" id="GO:0008270">
    <property type="term" value="F:zinc ion binding"/>
    <property type="evidence" value="ECO:0000318"/>
    <property type="project" value="GO_Central"/>
</dbReference>
<dbReference type="GO" id="GO:0006096">
    <property type="term" value="P:glycolytic process"/>
    <property type="evidence" value="ECO:0000318"/>
    <property type="project" value="GO_Central"/>
</dbReference>
<dbReference type="FunFam" id="3.20.20.70:FF:000112">
    <property type="entry name" value="Fructose-bisphosphate aldolase Fba"/>
    <property type="match status" value="1"/>
</dbReference>
<dbReference type="Gene3D" id="3.20.20.70">
    <property type="entry name" value="Aldolase class I"/>
    <property type="match status" value="1"/>
</dbReference>
<dbReference type="InterPro" id="IPR013785">
    <property type="entry name" value="Aldolase_TIM"/>
</dbReference>
<dbReference type="InterPro" id="IPR000771">
    <property type="entry name" value="FBA_II"/>
</dbReference>
<dbReference type="InterPro" id="IPR006411">
    <property type="entry name" value="Fruct_bisP_bact"/>
</dbReference>
<dbReference type="NCBIfam" id="TIGR00167">
    <property type="entry name" value="cbbA"/>
    <property type="match status" value="1"/>
</dbReference>
<dbReference type="NCBIfam" id="TIGR01520">
    <property type="entry name" value="FruBisAldo_II_A"/>
    <property type="match status" value="1"/>
</dbReference>
<dbReference type="NCBIfam" id="NF006628">
    <property type="entry name" value="PRK09197.1"/>
    <property type="match status" value="1"/>
</dbReference>
<dbReference type="PANTHER" id="PTHR30559:SF0">
    <property type="entry name" value="FRUCTOSE-BISPHOSPHATE ALDOLASE"/>
    <property type="match status" value="1"/>
</dbReference>
<dbReference type="PANTHER" id="PTHR30559">
    <property type="entry name" value="FRUCTOSE-BISPHOSPHATE ALDOLASE CLASS 2"/>
    <property type="match status" value="1"/>
</dbReference>
<dbReference type="Pfam" id="PF01116">
    <property type="entry name" value="F_bP_aldolase"/>
    <property type="match status" value="1"/>
</dbReference>
<dbReference type="PIRSF" id="PIRSF001359">
    <property type="entry name" value="F_bP_aldolase_II"/>
    <property type="match status" value="1"/>
</dbReference>
<dbReference type="SUPFAM" id="SSF51569">
    <property type="entry name" value="Aldolase"/>
    <property type="match status" value="1"/>
</dbReference>
<dbReference type="PROSITE" id="PS00602">
    <property type="entry name" value="ALDOLASE_CLASS_II_1"/>
    <property type="match status" value="1"/>
</dbReference>
<feature type="chain" id="PRO_0000178743" description="Fructose-bisphosphate aldolase">
    <location>
        <begin position="1"/>
        <end position="343"/>
    </location>
</feature>
<feature type="active site" description="Proton donor" evidence="1">
    <location>
        <position position="95"/>
    </location>
</feature>
<feature type="binding site" evidence="1">
    <location>
        <position position="53"/>
    </location>
    <ligand>
        <name>D-glyceraldehyde 3-phosphate</name>
        <dbReference type="ChEBI" id="CHEBI:59776"/>
    </ligand>
</feature>
<feature type="binding site" evidence="1">
    <location>
        <position position="96"/>
    </location>
    <ligand>
        <name>Zn(2+)</name>
        <dbReference type="ChEBI" id="CHEBI:29105"/>
        <label>1</label>
        <note>catalytic</note>
    </ligand>
</feature>
<feature type="binding site" evidence="1">
    <location>
        <position position="131"/>
    </location>
    <ligand>
        <name>Zn(2+)</name>
        <dbReference type="ChEBI" id="CHEBI:29105"/>
        <label>2</label>
    </ligand>
</feature>
<feature type="binding site" evidence="1">
    <location>
        <position position="161"/>
    </location>
    <ligand>
        <name>Zn(2+)</name>
        <dbReference type="ChEBI" id="CHEBI:29105"/>
        <label>2</label>
    </ligand>
</feature>
<feature type="binding site" evidence="1">
    <location>
        <position position="212"/>
    </location>
    <ligand>
        <name>Zn(2+)</name>
        <dbReference type="ChEBI" id="CHEBI:29105"/>
        <label>1</label>
        <note>catalytic</note>
    </ligand>
</feature>
<feature type="binding site" evidence="1">
    <location>
        <position position="213"/>
    </location>
    <ligand>
        <name>dihydroxyacetone phosphate</name>
        <dbReference type="ChEBI" id="CHEBI:57642"/>
    </ligand>
</feature>
<feature type="binding site" evidence="1">
    <location>
        <position position="252"/>
    </location>
    <ligand>
        <name>Zn(2+)</name>
        <dbReference type="ChEBI" id="CHEBI:29105"/>
        <label>1</label>
        <note>catalytic</note>
    </ligand>
</feature>
<feature type="binding site" evidence="1">
    <location>
        <begin position="253"/>
        <end position="255"/>
    </location>
    <ligand>
        <name>dihydroxyacetone phosphate</name>
        <dbReference type="ChEBI" id="CHEBI:57642"/>
    </ligand>
</feature>
<feature type="binding site" evidence="1">
    <location>
        <begin position="274"/>
        <end position="277"/>
    </location>
    <ligand>
        <name>dihydroxyacetone phosphate</name>
        <dbReference type="ChEBI" id="CHEBI:57642"/>
    </ligand>
</feature>
<proteinExistence type="inferred from homology"/>
<comment type="function">
    <text evidence="1">Catalyzes the aldol condensation of dihydroxyacetone phosphate (DHAP or glycerone-phosphate) with glyceraldehyde 3-phosphate (G3P) to form fructose 1,6-bisphosphate (FBP) in gluconeogenesis and the reverse reaction in glycolysis.</text>
</comment>
<comment type="catalytic activity">
    <reaction>
        <text>beta-D-fructose 1,6-bisphosphate = D-glyceraldehyde 3-phosphate + dihydroxyacetone phosphate</text>
        <dbReference type="Rhea" id="RHEA:14729"/>
        <dbReference type="ChEBI" id="CHEBI:32966"/>
        <dbReference type="ChEBI" id="CHEBI:57642"/>
        <dbReference type="ChEBI" id="CHEBI:59776"/>
        <dbReference type="EC" id="4.1.2.13"/>
    </reaction>
</comment>
<comment type="cofactor">
    <cofactor evidence="1">
        <name>Zn(2+)</name>
        <dbReference type="ChEBI" id="CHEBI:29105"/>
    </cofactor>
    <text evidence="1">Binds 2 Zn(2+) ions per subunit. One is catalytic and the other provides a structural contribution.</text>
</comment>
<comment type="pathway">
    <text>Carbohydrate degradation; glycolysis; D-glyceraldehyde 3-phosphate and glycerone phosphate from D-glucose: step 4/4.</text>
</comment>
<comment type="similarity">
    <text evidence="2">Belongs to the class II fructose-bisphosphate aldolase family.</text>
</comment>
<accession>Q9X8R6</accession>
<organism>
    <name type="scientific">Streptomyces coelicolor (strain ATCC BAA-471 / A3(2) / M145)</name>
    <dbReference type="NCBI Taxonomy" id="100226"/>
    <lineage>
        <taxon>Bacteria</taxon>
        <taxon>Bacillati</taxon>
        <taxon>Actinomycetota</taxon>
        <taxon>Actinomycetes</taxon>
        <taxon>Kitasatosporales</taxon>
        <taxon>Streptomycetaceae</taxon>
        <taxon>Streptomyces</taxon>
        <taxon>Streptomyces albidoflavus group</taxon>
    </lineage>
</organism>
<reference key="1">
    <citation type="journal article" date="2002" name="Nature">
        <title>Complete genome sequence of the model actinomycete Streptomyces coelicolor A3(2).</title>
        <authorList>
            <person name="Bentley S.D."/>
            <person name="Chater K.F."/>
            <person name="Cerdeno-Tarraga A.-M."/>
            <person name="Challis G.L."/>
            <person name="Thomson N.R."/>
            <person name="James K.D."/>
            <person name="Harris D.E."/>
            <person name="Quail M.A."/>
            <person name="Kieser H."/>
            <person name="Harper D."/>
            <person name="Bateman A."/>
            <person name="Brown S."/>
            <person name="Chandra G."/>
            <person name="Chen C.W."/>
            <person name="Collins M."/>
            <person name="Cronin A."/>
            <person name="Fraser A."/>
            <person name="Goble A."/>
            <person name="Hidalgo J."/>
            <person name="Hornsby T."/>
            <person name="Howarth S."/>
            <person name="Huang C.-H."/>
            <person name="Kieser T."/>
            <person name="Larke L."/>
            <person name="Murphy L.D."/>
            <person name="Oliver K."/>
            <person name="O'Neil S."/>
            <person name="Rabbinowitsch E."/>
            <person name="Rajandream M.A."/>
            <person name="Rutherford K.M."/>
            <person name="Rutter S."/>
            <person name="Seeger K."/>
            <person name="Saunders D."/>
            <person name="Sharp S."/>
            <person name="Squares R."/>
            <person name="Squares S."/>
            <person name="Taylor K."/>
            <person name="Warren T."/>
            <person name="Wietzorrek A."/>
            <person name="Woodward J.R."/>
            <person name="Barrell B.G."/>
            <person name="Parkhill J."/>
            <person name="Hopwood D.A."/>
        </authorList>
    </citation>
    <scope>NUCLEOTIDE SEQUENCE [LARGE SCALE GENOMIC DNA]</scope>
    <source>
        <strain>ATCC BAA-471 / A3(2) / M145</strain>
    </source>
</reference>
<sequence>MPIATPEVYNEMLDRAKAGKFAYPAINVTSSQTLHAALRGFAEAESDGIVQISTGGAEFLGGQHNKDMVTGAVALAEFAHIVAEKYDVTVALHTDHCPKDKLDGYVRPLIAVSEERVKAGRNPLFQSHMWDGSAETLADNLSIAQELLARARAARIILEVEITPTGGEEDGVSHEINDSLYTTVDDAVRTVEALGLGEKGRYLLAASFGNVHGVYKPGNVVLRPELLKELNEGIASKYGQPAGSKPFDFVFHGGSGSTAEEIATALENGVVKMNIDTDTQYAFTRPVVDHMFRNYDGVLKVDGEVGNKKTYDPRTWGKLAEAGMAARVVEACGHLRSAGQKIK</sequence>
<gene>
    <name type="primary">fba</name>
    <name type="ordered locus">SCO3649</name>
    <name type="ORF">SCH10.27c</name>
</gene>